<protein>
    <recommendedName>
        <fullName evidence="1">Small ribosomal subunit protein uS14</fullName>
    </recommendedName>
    <alternativeName>
        <fullName evidence="2">30S ribosomal protein S14</fullName>
    </alternativeName>
</protein>
<sequence>MAKVSSVQKNLKRSKLFNKLKLKRQALKSKIYDKNLSLEERFNLVLKLSKLPRNSSSTRIRNRCAETGRPRGYYRKFKLCRNIIRELAGSGIIPGLRKSSW</sequence>
<proteinExistence type="inferred from homology"/>
<dbReference type="EMBL" id="AP008981">
    <property type="protein sequence ID" value="BAG40515.1"/>
    <property type="molecule type" value="Genomic_DNA"/>
</dbReference>
<dbReference type="RefSeq" id="WP_012461618.1">
    <property type="nucleotide sequence ID" value="NC_010793.1"/>
</dbReference>
<dbReference type="SMR" id="B3CT18"/>
<dbReference type="GeneID" id="89459044"/>
<dbReference type="KEGG" id="ott:OTT_1057"/>
<dbReference type="HOGENOM" id="CLU_139869_0_1_5"/>
<dbReference type="OrthoDB" id="9810484at2"/>
<dbReference type="Proteomes" id="UP000001033">
    <property type="component" value="Chromosome"/>
</dbReference>
<dbReference type="GO" id="GO:0005737">
    <property type="term" value="C:cytoplasm"/>
    <property type="evidence" value="ECO:0007669"/>
    <property type="project" value="UniProtKB-ARBA"/>
</dbReference>
<dbReference type="GO" id="GO:0015935">
    <property type="term" value="C:small ribosomal subunit"/>
    <property type="evidence" value="ECO:0007669"/>
    <property type="project" value="TreeGrafter"/>
</dbReference>
<dbReference type="GO" id="GO:0019843">
    <property type="term" value="F:rRNA binding"/>
    <property type="evidence" value="ECO:0007669"/>
    <property type="project" value="UniProtKB-UniRule"/>
</dbReference>
<dbReference type="GO" id="GO:0003735">
    <property type="term" value="F:structural constituent of ribosome"/>
    <property type="evidence" value="ECO:0007669"/>
    <property type="project" value="InterPro"/>
</dbReference>
<dbReference type="GO" id="GO:0006412">
    <property type="term" value="P:translation"/>
    <property type="evidence" value="ECO:0007669"/>
    <property type="project" value="UniProtKB-UniRule"/>
</dbReference>
<dbReference type="FunFam" id="1.10.287.1480:FF:000001">
    <property type="entry name" value="30S ribosomal protein S14"/>
    <property type="match status" value="1"/>
</dbReference>
<dbReference type="Gene3D" id="1.10.287.1480">
    <property type="match status" value="1"/>
</dbReference>
<dbReference type="HAMAP" id="MF_00537">
    <property type="entry name" value="Ribosomal_uS14_1"/>
    <property type="match status" value="1"/>
</dbReference>
<dbReference type="InterPro" id="IPR001209">
    <property type="entry name" value="Ribosomal_uS14"/>
</dbReference>
<dbReference type="InterPro" id="IPR023036">
    <property type="entry name" value="Ribosomal_uS14_bac/plastid"/>
</dbReference>
<dbReference type="InterPro" id="IPR018271">
    <property type="entry name" value="Ribosomal_uS14_CS"/>
</dbReference>
<dbReference type="NCBIfam" id="NF006477">
    <property type="entry name" value="PRK08881.1"/>
    <property type="match status" value="1"/>
</dbReference>
<dbReference type="PANTHER" id="PTHR19836">
    <property type="entry name" value="30S RIBOSOMAL PROTEIN S14"/>
    <property type="match status" value="1"/>
</dbReference>
<dbReference type="PANTHER" id="PTHR19836:SF19">
    <property type="entry name" value="SMALL RIBOSOMAL SUBUNIT PROTEIN US14M"/>
    <property type="match status" value="1"/>
</dbReference>
<dbReference type="Pfam" id="PF00253">
    <property type="entry name" value="Ribosomal_S14"/>
    <property type="match status" value="1"/>
</dbReference>
<dbReference type="SUPFAM" id="SSF57716">
    <property type="entry name" value="Glucocorticoid receptor-like (DNA-binding domain)"/>
    <property type="match status" value="1"/>
</dbReference>
<dbReference type="PROSITE" id="PS00527">
    <property type="entry name" value="RIBOSOMAL_S14"/>
    <property type="match status" value="1"/>
</dbReference>
<comment type="function">
    <text evidence="1">Binds 16S rRNA, required for the assembly of 30S particles and may also be responsible for determining the conformation of the 16S rRNA at the A site.</text>
</comment>
<comment type="subunit">
    <text evidence="1">Part of the 30S ribosomal subunit. Contacts proteins S3 and S10.</text>
</comment>
<comment type="similarity">
    <text evidence="1">Belongs to the universal ribosomal protein uS14 family.</text>
</comment>
<evidence type="ECO:0000255" key="1">
    <source>
        <dbReference type="HAMAP-Rule" id="MF_00537"/>
    </source>
</evidence>
<evidence type="ECO:0000305" key="2"/>
<name>RS14_ORITI</name>
<accession>B3CT18</accession>
<feature type="chain" id="PRO_1000128477" description="Small ribosomal subunit protein uS14">
    <location>
        <begin position="1"/>
        <end position="101"/>
    </location>
</feature>
<keyword id="KW-0687">Ribonucleoprotein</keyword>
<keyword id="KW-0689">Ribosomal protein</keyword>
<keyword id="KW-0694">RNA-binding</keyword>
<keyword id="KW-0699">rRNA-binding</keyword>
<gene>
    <name evidence="1" type="primary">rpsN</name>
    <name type="ordered locus">OTT_1057</name>
</gene>
<reference key="1">
    <citation type="journal article" date="2008" name="DNA Res.">
        <title>The whole-genome sequencing of the obligate intracellular bacterium Orientia tsutsugamushi revealed massive gene amplification during reductive genome evolution.</title>
        <authorList>
            <person name="Nakayama K."/>
            <person name="Yamashita A."/>
            <person name="Kurokawa K."/>
            <person name="Morimoto T."/>
            <person name="Ogawa M."/>
            <person name="Fukuhara M."/>
            <person name="Urakami H."/>
            <person name="Ohnishi M."/>
            <person name="Uchiyama I."/>
            <person name="Ogura Y."/>
            <person name="Ooka T."/>
            <person name="Oshima K."/>
            <person name="Tamura A."/>
            <person name="Hattori M."/>
            <person name="Hayashi T."/>
        </authorList>
    </citation>
    <scope>NUCLEOTIDE SEQUENCE [LARGE SCALE GENOMIC DNA]</scope>
    <source>
        <strain>Ikeda</strain>
    </source>
</reference>
<organism>
    <name type="scientific">Orientia tsutsugamushi (strain Ikeda)</name>
    <name type="common">Rickettsia tsutsugamushi</name>
    <dbReference type="NCBI Taxonomy" id="334380"/>
    <lineage>
        <taxon>Bacteria</taxon>
        <taxon>Pseudomonadati</taxon>
        <taxon>Pseudomonadota</taxon>
        <taxon>Alphaproteobacteria</taxon>
        <taxon>Rickettsiales</taxon>
        <taxon>Rickettsiaceae</taxon>
        <taxon>Rickettsieae</taxon>
        <taxon>Orientia</taxon>
    </lineage>
</organism>